<proteinExistence type="uncertain"/>
<organism>
    <name type="scientific">Mycoplasma pneumoniae (strain ATCC 29342 / M129 / Subtype 1)</name>
    <name type="common">Mycoplasmoides pneumoniae</name>
    <dbReference type="NCBI Taxonomy" id="272634"/>
    <lineage>
        <taxon>Bacteria</taxon>
        <taxon>Bacillati</taxon>
        <taxon>Mycoplasmatota</taxon>
        <taxon>Mycoplasmoidales</taxon>
        <taxon>Mycoplasmoidaceae</taxon>
        <taxon>Mycoplasmoides</taxon>
    </lineage>
</organism>
<name>Y092_MYCPN</name>
<comment type="similarity">
    <text evidence="1">Belongs to the MgpC family.</text>
</comment>
<comment type="caution">
    <text evidence="1">Could be the product of a pseudogene.</text>
</comment>
<reference key="1">
    <citation type="journal article" date="1996" name="Nucleic Acids Res.">
        <title>Complete sequence analysis of the genome of the bacterium Mycoplasma pneumoniae.</title>
        <authorList>
            <person name="Himmelreich R."/>
            <person name="Hilbert H."/>
            <person name="Plagens H."/>
            <person name="Pirkl E."/>
            <person name="Li B.-C."/>
            <person name="Herrmann R."/>
        </authorList>
    </citation>
    <scope>NUCLEOTIDE SEQUENCE [LARGE SCALE GENOMIC DNA]</scope>
    <source>
        <strain>ATCC 29342 / M129 / Subtype 1</strain>
    </source>
</reference>
<gene>
    <name type="ordered locus">MPN_092</name>
    <name type="ORF">MP062</name>
    <name type="ORF">R02_orf173</name>
</gene>
<evidence type="ECO:0000305" key="1"/>
<protein>
    <recommendedName>
        <fullName>Putative MgpC-like protein MPN_092</fullName>
    </recommendedName>
</protein>
<feature type="chain" id="PRO_0000210717" description="Putative MgpC-like protein MPN_092">
    <location>
        <begin position="1"/>
        <end position="173"/>
    </location>
</feature>
<accession>P75600</accession>
<dbReference type="EMBL" id="U00089">
    <property type="protein sequence ID" value="AAB95710.1"/>
    <property type="molecule type" value="Genomic_DNA"/>
</dbReference>
<dbReference type="PIR" id="S73388">
    <property type="entry name" value="S73388"/>
</dbReference>
<dbReference type="SMR" id="P75600"/>
<dbReference type="STRING" id="272634.MPN_092"/>
<dbReference type="EnsemblBacteria" id="AAB95710">
    <property type="protein sequence ID" value="AAB95710"/>
    <property type="gene ID" value="MPN_092"/>
</dbReference>
<dbReference type="KEGG" id="mpn:MPN_092"/>
<dbReference type="HOGENOM" id="CLU_1545950_0_0_14"/>
<dbReference type="Proteomes" id="UP000000808">
    <property type="component" value="Chromosome"/>
</dbReference>
<keyword id="KW-1185">Reference proteome</keyword>
<sequence length="173" mass="18777">MVSKWGAGSAFGLQGNGSNSSGLRPLLKRTAQINLRQTQDNAQTGKFSKYLNTAQALHQMGVIVPSLETWPGKPSTGIATRAVGGVSVQAATRLDFYKWRSAECNNKVIPHLHVPTRLLKWPDRCDGFKRGTEFVVLGCRGGPGIGSRNLMSPHRAQLGHRQAEAVCRKPVGF</sequence>